<sequence length="257" mass="30373">MATPPKRGRLEGRVKKIAVEGNIAAGKSTFVNILKQADEGWEVVPEPVARWCNVQQNSEEDCEELTTSQKSGGNVLQMMYEKPERWSFTFQMYACLSRIRAQLKSIDGKLREAENPVVFFERSVYSDRYIFAANLYESDCMNETEWTIYQDWHDWMNKQFGQSLALDGIIYLRATPEKCLNRIYLRGRDEEQEIPIEYLEKLHYKHESWLQHKTLRTDFEYLQEIPILTLDVNEDFKGKKDRYDHMTEKVKEFLSTL</sequence>
<keyword id="KW-0067">ATP-binding</keyword>
<keyword id="KW-0418">Kinase</keyword>
<keyword id="KW-0547">Nucleotide-binding</keyword>
<keyword id="KW-0539">Nucleus</keyword>
<keyword id="KW-1185">Reference proteome</keyword>
<keyword id="KW-0808">Transferase</keyword>
<name>DCK_CHICK</name>
<evidence type="ECO:0000250" key="1">
    <source>
        <dbReference type="UniProtKB" id="P27707"/>
    </source>
</evidence>
<evidence type="ECO:0000255" key="2">
    <source>
        <dbReference type="PIRSR" id="PIRSR000705-1"/>
    </source>
</evidence>
<evidence type="ECO:0000255" key="3">
    <source>
        <dbReference type="PIRSR" id="PIRSR000705-2"/>
    </source>
</evidence>
<evidence type="ECO:0000255" key="4">
    <source>
        <dbReference type="PIRSR" id="PIRSR000705-3"/>
    </source>
</evidence>
<evidence type="ECO:0000269" key="5">
    <source>
    </source>
</evidence>
<evidence type="ECO:0000303" key="6">
    <source>
    </source>
</evidence>
<evidence type="ECO:0000305" key="7"/>
<evidence type="ECO:0000305" key="8">
    <source>
    </source>
</evidence>
<evidence type="ECO:0000312" key="9">
    <source>
        <dbReference type="EMBL" id="ACF41168.1"/>
    </source>
</evidence>
<evidence type="ECO:0000312" key="10">
    <source>
        <dbReference type="EMBL" id="CAG31090.1"/>
    </source>
</evidence>
<proteinExistence type="evidence at protein level"/>
<reference evidence="9" key="1">
    <citation type="submission" date="2008-06" db="EMBL/GenBank/DDBJ databases">
        <title>Mammals have lost vertebrate deoxyadenosine kinase.</title>
        <authorList>
            <person name="Gojkovic Z."/>
        </authorList>
    </citation>
    <scope>NUCLEOTIDE SEQUENCE [MRNA]</scope>
</reference>
<reference evidence="10" key="2">
    <citation type="journal article" date="2005" name="Genome Biol.">
        <title>Full-length cDNAs from chicken bursal lymphocytes to facilitate gene function analysis.</title>
        <authorList>
            <person name="Caldwell R.B."/>
            <person name="Kierzek A.M."/>
            <person name="Arakawa H."/>
            <person name="Bezzubov Y."/>
            <person name="Zaim J."/>
            <person name="Fiedler P."/>
            <person name="Kutter S."/>
            <person name="Blagodatski A."/>
            <person name="Kostovska D."/>
            <person name="Koter M."/>
            <person name="Plachy J."/>
            <person name="Carninci P."/>
            <person name="Hayashizaki Y."/>
            <person name="Buerstedde J.-M."/>
        </authorList>
    </citation>
    <scope>NUCLEOTIDE SEQUENCE [LARGE SCALE MRNA]</scope>
    <source>
        <strain evidence="10">CB</strain>
        <tissue evidence="10">Bursa of Fabricius</tissue>
    </source>
</reference>
<reference evidence="7" key="3">
    <citation type="journal article" date="2016" name="Nucleosides Nucleotides Nucleic Acids">
        <title>Gene duplications and losses among vertebrate deoxyribonucleoside kinases of the non-TK1 Family.</title>
        <authorList>
            <person name="Mutahir Z."/>
            <person name="Christiansen L.S."/>
            <person name="Clausen A.R."/>
            <person name="Berchtold M.W."/>
            <person name="Gojkovic Z."/>
            <person name="Munch-Petersen B."/>
            <person name="Knecht W."/>
            <person name="Piskur J."/>
        </authorList>
    </citation>
    <scope>FUNCTION</scope>
    <scope>CATALYTIC ACTIVITY</scope>
    <scope>BIOPHYSICOCHEMICAL PROPERTIES</scope>
    <scope>TISSUE SPECIFICITY</scope>
</reference>
<dbReference type="EC" id="2.7.1.74" evidence="5"/>
<dbReference type="EC" id="2.7.1.76" evidence="5"/>
<dbReference type="EC" id="2.7.1.113" evidence="5"/>
<dbReference type="EMBL" id="EU835757">
    <property type="protein sequence ID" value="ACF41168.1"/>
    <property type="molecule type" value="mRNA"/>
</dbReference>
<dbReference type="EMBL" id="AJ719431">
    <property type="protein sequence ID" value="CAG31090.1"/>
    <property type="molecule type" value="mRNA"/>
</dbReference>
<dbReference type="RefSeq" id="NP_001006451.1">
    <property type="nucleotide sequence ID" value="NM_001006451.2"/>
</dbReference>
<dbReference type="SMR" id="Q5ZMF3"/>
<dbReference type="FunCoup" id="Q5ZMF3">
    <property type="interactions" value="152"/>
</dbReference>
<dbReference type="Ensembl" id="ENSGALT00000044158">
    <property type="protein sequence ID" value="ENSGALP00000042484"/>
    <property type="gene ID" value="ENSGALG00000028501"/>
</dbReference>
<dbReference type="Ensembl" id="ENSGALT00010010013.1">
    <property type="protein sequence ID" value="ENSGALP00010005854.1"/>
    <property type="gene ID" value="ENSGALG00010004283.1"/>
</dbReference>
<dbReference type="GeneID" id="422648"/>
<dbReference type="KEGG" id="gga:422648"/>
<dbReference type="CTD" id="1633"/>
<dbReference type="VEuPathDB" id="HostDB:geneid_422648"/>
<dbReference type="eggNOG" id="KOG4235">
    <property type="taxonomic scope" value="Eukaryota"/>
</dbReference>
<dbReference type="GeneTree" id="ENSGT00940000157321"/>
<dbReference type="HOGENOM" id="CLU_030466_1_1_1"/>
<dbReference type="InParanoid" id="Q5ZMF3"/>
<dbReference type="OMA" id="EAMVMTP"/>
<dbReference type="OrthoDB" id="567086at2759"/>
<dbReference type="PhylomeDB" id="Q5ZMF3"/>
<dbReference type="BRENDA" id="2.7.1.74">
    <property type="organism ID" value="1306"/>
</dbReference>
<dbReference type="PRO" id="PR:Q5ZMF3"/>
<dbReference type="Proteomes" id="UP000000539">
    <property type="component" value="Chromosome 4"/>
</dbReference>
<dbReference type="GO" id="GO:0005634">
    <property type="term" value="C:nucleus"/>
    <property type="evidence" value="ECO:0007669"/>
    <property type="project" value="UniProtKB-SubCell"/>
</dbReference>
<dbReference type="GO" id="GO:0005524">
    <property type="term" value="F:ATP binding"/>
    <property type="evidence" value="ECO:0007669"/>
    <property type="project" value="UniProtKB-KW"/>
</dbReference>
<dbReference type="GO" id="GO:0004136">
    <property type="term" value="F:deoxyadenosine kinase activity"/>
    <property type="evidence" value="ECO:0000314"/>
    <property type="project" value="UniProtKB"/>
</dbReference>
<dbReference type="GO" id="GO:0004137">
    <property type="term" value="F:deoxycytidine kinase activity"/>
    <property type="evidence" value="ECO:0000314"/>
    <property type="project" value="UniProtKB"/>
</dbReference>
<dbReference type="GO" id="GO:0004138">
    <property type="term" value="F:deoxyguanosine kinase activity"/>
    <property type="evidence" value="ECO:0000314"/>
    <property type="project" value="UniProtKB"/>
</dbReference>
<dbReference type="GO" id="GO:0009157">
    <property type="term" value="P:deoxyribonucleoside monophosphate biosynthetic process"/>
    <property type="evidence" value="ECO:0000314"/>
    <property type="project" value="UniProtKB"/>
</dbReference>
<dbReference type="CDD" id="cd01673">
    <property type="entry name" value="dNK"/>
    <property type="match status" value="1"/>
</dbReference>
<dbReference type="FunFam" id="3.40.50.300:FF:000461">
    <property type="entry name" value="Deoxycytidine kinase"/>
    <property type="match status" value="1"/>
</dbReference>
<dbReference type="Gene3D" id="3.40.50.300">
    <property type="entry name" value="P-loop containing nucleotide triphosphate hydrolases"/>
    <property type="match status" value="1"/>
</dbReference>
<dbReference type="InterPro" id="IPR002624">
    <property type="entry name" value="DCK/DGK"/>
</dbReference>
<dbReference type="InterPro" id="IPR050566">
    <property type="entry name" value="Deoxyribonucleoside_kinase"/>
</dbReference>
<dbReference type="InterPro" id="IPR031314">
    <property type="entry name" value="DNK_dom"/>
</dbReference>
<dbReference type="InterPro" id="IPR027417">
    <property type="entry name" value="P-loop_NTPase"/>
</dbReference>
<dbReference type="PANTHER" id="PTHR10513:SF19">
    <property type="entry name" value="DEOXYCYTIDINE KINASE"/>
    <property type="match status" value="1"/>
</dbReference>
<dbReference type="PANTHER" id="PTHR10513">
    <property type="entry name" value="DEOXYNUCLEOSIDE KINASE"/>
    <property type="match status" value="1"/>
</dbReference>
<dbReference type="Pfam" id="PF01712">
    <property type="entry name" value="dNK"/>
    <property type="match status" value="1"/>
</dbReference>
<dbReference type="PIRSF" id="PIRSF000705">
    <property type="entry name" value="DNK"/>
    <property type="match status" value="1"/>
</dbReference>
<dbReference type="SUPFAM" id="SSF52540">
    <property type="entry name" value="P-loop containing nucleoside triphosphate hydrolases"/>
    <property type="match status" value="1"/>
</dbReference>
<feature type="chain" id="PRO_0000449294" description="Deoxycytidine kinase">
    <location>
        <begin position="1"/>
        <end position="257"/>
    </location>
</feature>
<feature type="active site" description="Proton acceptor" evidence="2">
    <location>
        <position position="121"/>
    </location>
</feature>
<feature type="binding site" evidence="4">
    <location>
        <begin position="21"/>
        <end position="29"/>
    </location>
    <ligand>
        <name>ATP</name>
        <dbReference type="ChEBI" id="CHEBI:30616"/>
    </ligand>
</feature>
<feature type="binding site" evidence="3">
    <location>
        <position position="46"/>
    </location>
    <ligand>
        <name>substrate</name>
    </ligand>
</feature>
<feature type="binding site" evidence="3">
    <location>
        <position position="80"/>
    </location>
    <ligand>
        <name>substrate</name>
    </ligand>
</feature>
<feature type="binding site" evidence="3">
    <location>
        <position position="91"/>
    </location>
    <ligand>
        <name>substrate</name>
    </ligand>
</feature>
<feature type="binding site" evidence="3">
    <location>
        <position position="122"/>
    </location>
    <ligand>
        <name>substrate</name>
    </ligand>
</feature>
<feature type="binding site" evidence="3">
    <location>
        <position position="127"/>
    </location>
    <ligand>
        <name>substrate</name>
    </ligand>
</feature>
<feature type="binding site" evidence="4">
    <location>
        <begin position="182"/>
        <end position="186"/>
    </location>
    <ligand>
        <name>ATP</name>
        <dbReference type="ChEBI" id="CHEBI:30616"/>
    </ligand>
</feature>
<feature type="binding site" evidence="3">
    <location>
        <position position="191"/>
    </location>
    <ligand>
        <name>substrate</name>
    </ligand>
</feature>
<feature type="binding site" evidence="4">
    <location>
        <begin position="234"/>
        <end position="236"/>
    </location>
    <ligand>
        <name>ATP</name>
        <dbReference type="ChEBI" id="CHEBI:30616"/>
    </ligand>
</feature>
<protein>
    <recommendedName>
        <fullName evidence="8">Deoxycytidine kinase</fullName>
        <shortName evidence="6">GgdCK</shortName>
        <ecNumber evidence="5">2.7.1.74</ecNumber>
    </recommendedName>
    <alternativeName>
        <fullName evidence="8">Deoxyadenosine kinase</fullName>
        <ecNumber evidence="5">2.7.1.76</ecNumber>
    </alternativeName>
    <alternativeName>
        <fullName evidence="8">Deoxyguanosine kinase</fullName>
        <ecNumber evidence="5">2.7.1.113</ecNumber>
    </alternativeName>
</protein>
<organism evidence="10">
    <name type="scientific">Gallus gallus</name>
    <name type="common">Chicken</name>
    <dbReference type="NCBI Taxonomy" id="9031"/>
    <lineage>
        <taxon>Eukaryota</taxon>
        <taxon>Metazoa</taxon>
        <taxon>Chordata</taxon>
        <taxon>Craniata</taxon>
        <taxon>Vertebrata</taxon>
        <taxon>Euteleostomi</taxon>
        <taxon>Archelosauria</taxon>
        <taxon>Archosauria</taxon>
        <taxon>Dinosauria</taxon>
        <taxon>Saurischia</taxon>
        <taxon>Theropoda</taxon>
        <taxon>Coelurosauria</taxon>
        <taxon>Aves</taxon>
        <taxon>Neognathae</taxon>
        <taxon>Galloanserae</taxon>
        <taxon>Galliformes</taxon>
        <taxon>Phasianidae</taxon>
        <taxon>Phasianinae</taxon>
        <taxon>Gallus</taxon>
    </lineage>
</organism>
<accession>Q5ZMF3</accession>
<comment type="function">
    <text evidence="5">Phosphorylates the deoxyribonucleosides deoxycytidine, deoxyguanosine and deoxyadenosine (PubMed:27906638). Displays highest activity against deoxycytidine followed by deoxyadenosine and then deoxyguanosine (PubMed:27906638). Shows only very minor activity against deoxyuridine and deoxythymidine (PubMed:27906638).</text>
</comment>
<comment type="catalytic activity">
    <reaction evidence="5">
        <text>2'-deoxycytidine + a ribonucleoside 5'-triphosphate = dCMP + a ribonucleoside 5'-diphosphate + H(+)</text>
        <dbReference type="Rhea" id="RHEA:20061"/>
        <dbReference type="ChEBI" id="CHEBI:15378"/>
        <dbReference type="ChEBI" id="CHEBI:15698"/>
        <dbReference type="ChEBI" id="CHEBI:57566"/>
        <dbReference type="ChEBI" id="CHEBI:57930"/>
        <dbReference type="ChEBI" id="CHEBI:61557"/>
        <dbReference type="EC" id="2.7.1.74"/>
    </reaction>
</comment>
<comment type="catalytic activity">
    <reaction evidence="5">
        <text>2'-deoxyadenosine + ATP = dAMP + ADP + H(+)</text>
        <dbReference type="Rhea" id="RHEA:23452"/>
        <dbReference type="ChEBI" id="CHEBI:15378"/>
        <dbReference type="ChEBI" id="CHEBI:17256"/>
        <dbReference type="ChEBI" id="CHEBI:30616"/>
        <dbReference type="ChEBI" id="CHEBI:58245"/>
        <dbReference type="ChEBI" id="CHEBI:456216"/>
        <dbReference type="EC" id="2.7.1.76"/>
    </reaction>
</comment>
<comment type="catalytic activity">
    <reaction evidence="5">
        <text>2'-deoxyguanosine + ATP = dGMP + ADP + H(+)</text>
        <dbReference type="Rhea" id="RHEA:19201"/>
        <dbReference type="ChEBI" id="CHEBI:15378"/>
        <dbReference type="ChEBI" id="CHEBI:17172"/>
        <dbReference type="ChEBI" id="CHEBI:30616"/>
        <dbReference type="ChEBI" id="CHEBI:57673"/>
        <dbReference type="ChEBI" id="CHEBI:456216"/>
        <dbReference type="EC" id="2.7.1.113"/>
    </reaction>
</comment>
<comment type="biophysicochemical properties">
    <kinetics>
        <KM evidence="5">0.7 uM for deoxycytidine</KM>
        <KM evidence="5">93 uM for deoxyadenosine</KM>
        <KM evidence="5">122 uM for deoxyguanosine</KM>
        <KM evidence="5">7502 uM for deoxyuridine</KM>
        <KM evidence="5">18546 uM for deoxythymidine</KM>
        <Vmax evidence="5">0.1 umol/min/mg enzyme toward deoxycytidine</Vmax>
        <Vmax evidence="5">8.1 umol/min/mg enzyme toward deoxyadenosine</Vmax>
        <Vmax evidence="5">2.4 umol/min/mg enzyme toward deoxyguanosine</Vmax>
        <Vmax evidence="5">2.1 umol/min/mg enzyme toward deoxyuridine</Vmax>
        <Vmax evidence="5">2.1 umol/min/mg enzyme toward deoxythymidine</Vmax>
        <text evidence="5">kcat is 0.05 sec(-1) with deoxycytodine as substrate. kcat is 4.07 sec(-1) with deoxyadenosine as substrate. kcat is 1.23 sec(-1) with deoxyguanosine as substrate. kcat is 1.05 sec(-1) with deoxyuridine as substrate. kcat is 1.08 sec(-1) with deoxythymidine as substrate.</text>
    </kinetics>
</comment>
<comment type="subunit">
    <text evidence="1">Homodimer.</text>
</comment>
<comment type="subcellular location">
    <subcellularLocation>
        <location evidence="1">Nucleus</location>
    </subcellularLocation>
</comment>
<comment type="tissue specificity">
    <text evidence="5">Expressed at high levels in adult intestine, spleen, thymus and testis with lower levels in skeletal muscle and eye. In the embryo, expressed at higher levels until day 10 with lower levels in later stages.</text>
</comment>
<comment type="similarity">
    <text evidence="7">Belongs to the DCK/DGK family.</text>
</comment>
<gene>
    <name evidence="6" type="primary">DCK</name>
    <name evidence="10" type="ORF">RCJMB04_2e2</name>
</gene>